<organism>
    <name type="scientific">Bos taurus</name>
    <name type="common">Bovine</name>
    <dbReference type="NCBI Taxonomy" id="9913"/>
    <lineage>
        <taxon>Eukaryota</taxon>
        <taxon>Metazoa</taxon>
        <taxon>Chordata</taxon>
        <taxon>Craniata</taxon>
        <taxon>Vertebrata</taxon>
        <taxon>Euteleostomi</taxon>
        <taxon>Mammalia</taxon>
        <taxon>Eutheria</taxon>
        <taxon>Laurasiatheria</taxon>
        <taxon>Artiodactyla</taxon>
        <taxon>Ruminantia</taxon>
        <taxon>Pecora</taxon>
        <taxon>Bovidae</taxon>
        <taxon>Bovinae</taxon>
        <taxon>Bos</taxon>
    </lineage>
</organism>
<sequence length="240" mass="26513">MVQLWKLVLLCGLLAGTSASLPDIRGNDVLRKLKSGLERGLDTFDSTIEIIFQNLKTELESRCSDEVVEQQETENFLEQLISRIFQVVSRLTGVRIRNVQVPDITFEATSENSANVLIPITADVTVSLPFLGEIVDLDLNVDLQTTVSIETDTEDPQVVVGECTNNPESISLTVLHSRFGLVNDVVDIGVNLARRVVSSVVEGELCPRFRELLESLDAECVEKLIGESQDTTQQEPEGSR</sequence>
<dbReference type="EMBL" id="U79414">
    <property type="protein sequence ID" value="AAB38283.1"/>
    <property type="molecule type" value="mRNA"/>
</dbReference>
<dbReference type="RefSeq" id="NP_777227.1">
    <property type="nucleotide sequence ID" value="NM_174802.2"/>
</dbReference>
<dbReference type="PDB" id="5WD6">
    <property type="method" value="X-ray"/>
    <property type="resolution" value="2.00 A"/>
    <property type="chains" value="A/B=20-240"/>
</dbReference>
<dbReference type="PDB" id="6O1T">
    <property type="method" value="X-ray"/>
    <property type="resolution" value="2.30 A"/>
    <property type="chains" value="A/B=29-229"/>
</dbReference>
<dbReference type="PDBsum" id="5WD6"/>
<dbReference type="PDBsum" id="6O1T"/>
<dbReference type="SMR" id="P79125"/>
<dbReference type="FunCoup" id="P79125">
    <property type="interactions" value="15"/>
</dbReference>
<dbReference type="STRING" id="9913.ENSBTAP00000026321"/>
<dbReference type="PaxDb" id="9913-ENSBTAP00000026321"/>
<dbReference type="GeneID" id="286881"/>
<dbReference type="KEGG" id="bta:286881"/>
<dbReference type="CTD" id="286881"/>
<dbReference type="eggNOG" id="ENOG502TE6F">
    <property type="taxonomic scope" value="Eukaryota"/>
</dbReference>
<dbReference type="InParanoid" id="P79125"/>
<dbReference type="OrthoDB" id="9838142at2759"/>
<dbReference type="Proteomes" id="UP000009136">
    <property type="component" value="Unplaced"/>
</dbReference>
<dbReference type="GO" id="GO:0005576">
    <property type="term" value="C:extracellular region"/>
    <property type="evidence" value="ECO:0007669"/>
    <property type="project" value="UniProtKB-SubCell"/>
</dbReference>
<dbReference type="GO" id="GO:0030141">
    <property type="term" value="C:secretory granule"/>
    <property type="evidence" value="ECO:0000318"/>
    <property type="project" value="GO_Central"/>
</dbReference>
<dbReference type="GO" id="GO:0001530">
    <property type="term" value="F:lipopolysaccharide binding"/>
    <property type="evidence" value="ECO:0000318"/>
    <property type="project" value="GO_Central"/>
</dbReference>
<dbReference type="Gene3D" id="3.15.10.10">
    <property type="entry name" value="Bactericidal permeability-increasing protein, domain 1"/>
    <property type="match status" value="1"/>
</dbReference>
<dbReference type="InterPro" id="IPR017943">
    <property type="entry name" value="Bactericidal_perm-incr_a/b_dom"/>
</dbReference>
<dbReference type="InterPro" id="IPR052507">
    <property type="entry name" value="BPI_fold-antibacterial"/>
</dbReference>
<dbReference type="InterPro" id="IPR017942">
    <property type="entry name" value="Lipid-bd_serum_glycop_N"/>
</dbReference>
<dbReference type="PANTHER" id="PTHR47145">
    <property type="entry name" value="BPI FOLD-CONTAINING FAMILY A MEMBER 2"/>
    <property type="match status" value="1"/>
</dbReference>
<dbReference type="PANTHER" id="PTHR47145:SF1">
    <property type="entry name" value="BPI FOLD-CONTAINING FAMILY A MEMBER 2"/>
    <property type="match status" value="1"/>
</dbReference>
<dbReference type="Pfam" id="PF01273">
    <property type="entry name" value="LBP_BPI_CETP"/>
    <property type="match status" value="1"/>
</dbReference>
<dbReference type="SUPFAM" id="SSF55394">
    <property type="entry name" value="Bactericidal permeability-increasing protein, BPI"/>
    <property type="match status" value="1"/>
</dbReference>
<comment type="subcellular location">
    <subcellularLocation>
        <location evidence="1">Secreted</location>
    </subcellularLocation>
</comment>
<comment type="tissue specificity">
    <text>Parotid glands.</text>
</comment>
<comment type="similarity">
    <text evidence="3">Belongs to the BPI/LBP/Plunc superfamily. Plunc family.</text>
</comment>
<keyword id="KW-0002">3D-structure</keyword>
<keyword id="KW-1015">Disulfide bond</keyword>
<keyword id="KW-1185">Reference proteome</keyword>
<keyword id="KW-0964">Secreted</keyword>
<keyword id="KW-0732">Signal</keyword>
<protein>
    <recommendedName>
        <fullName>Short palate, lung and nasal epithelium carcinoma-associated protein 2B</fullName>
    </recommendedName>
    <alternativeName>
        <fullName>BSP30b</fullName>
    </alternativeName>
    <alternativeName>
        <fullName>Common salivary protein form b</fullName>
    </alternativeName>
</protein>
<accession>P79125</accession>
<reference key="1">
    <citation type="journal article" date="2002" name="Biochim. Biophys. Acta">
        <title>The BSP30 salivary proteins from cattle, LUNX/PLUNC and von Ebner's minor salivary gland protein are members of the PSP/LBP superfamily of proteins.</title>
        <authorList>
            <person name="Wheeler T.T."/>
            <person name="Haigh B.J."/>
            <person name="McCracken J.Y."/>
            <person name="Wilkins R.J."/>
            <person name="Morris C.A."/>
            <person name="Grigor M.R."/>
        </authorList>
    </citation>
    <scope>NUCLEOTIDE SEQUENCE [MRNA]</scope>
    <source>
        <strain>Holstein-Friesian</strain>
        <tissue>Parotid gland</tissue>
    </source>
</reference>
<gene>
    <name type="primary">SPLUNC2B</name>
    <name type="synonym">BSP30B</name>
</gene>
<feature type="signal peptide" evidence="2">
    <location>
        <begin position="1"/>
        <end position="19"/>
    </location>
</feature>
<feature type="chain" id="PRO_0000017183" description="Short palate, lung and nasal epithelium carcinoma-associated protein 2B">
    <location>
        <begin position="20"/>
        <end position="240"/>
    </location>
</feature>
<feature type="disulfide bond" evidence="1">
    <location>
        <begin position="163"/>
        <end position="206"/>
    </location>
</feature>
<feature type="helix" evidence="4">
    <location>
        <begin position="31"/>
        <end position="39"/>
    </location>
</feature>
<feature type="helix" evidence="4">
    <location>
        <begin position="41"/>
        <end position="44"/>
    </location>
</feature>
<feature type="helix" evidence="4">
    <location>
        <begin position="47"/>
        <end position="60"/>
    </location>
</feature>
<feature type="turn" evidence="4">
    <location>
        <begin position="61"/>
        <end position="63"/>
    </location>
</feature>
<feature type="helix" evidence="4">
    <location>
        <begin position="72"/>
        <end position="91"/>
    </location>
</feature>
<feature type="strand" evidence="4">
    <location>
        <begin position="92"/>
        <end position="100"/>
    </location>
</feature>
<feature type="strand" evidence="4">
    <location>
        <begin position="105"/>
        <end position="110"/>
    </location>
</feature>
<feature type="strand" evidence="4">
    <location>
        <begin position="113"/>
        <end position="128"/>
    </location>
</feature>
<feature type="turn" evidence="4">
    <location>
        <begin position="129"/>
        <end position="131"/>
    </location>
</feature>
<feature type="strand" evidence="4">
    <location>
        <begin position="132"/>
        <end position="149"/>
    </location>
</feature>
<feature type="strand" evidence="4">
    <location>
        <begin position="158"/>
        <end position="163"/>
    </location>
</feature>
<feature type="helix" evidence="4">
    <location>
        <begin position="167"/>
        <end position="169"/>
    </location>
</feature>
<feature type="strand" evidence="4">
    <location>
        <begin position="170"/>
        <end position="176"/>
    </location>
</feature>
<feature type="helix" evidence="4">
    <location>
        <begin position="184"/>
        <end position="203"/>
    </location>
</feature>
<feature type="helix" evidence="4">
    <location>
        <begin position="205"/>
        <end position="214"/>
    </location>
</feature>
<feature type="helix" evidence="4">
    <location>
        <begin position="218"/>
        <end position="227"/>
    </location>
</feature>
<evidence type="ECO:0000250" key="1"/>
<evidence type="ECO:0000255" key="2"/>
<evidence type="ECO:0000305" key="3"/>
<evidence type="ECO:0007829" key="4">
    <source>
        <dbReference type="PDB" id="5WD6"/>
    </source>
</evidence>
<name>SPL2B_BOVIN</name>
<proteinExistence type="evidence at protein level"/>